<proteinExistence type="inferred from homology"/>
<protein>
    <recommendedName>
        <fullName evidence="1">Recombination protein RecR</fullName>
    </recommendedName>
</protein>
<keyword id="KW-0227">DNA damage</keyword>
<keyword id="KW-0233">DNA recombination</keyword>
<keyword id="KW-0234">DNA repair</keyword>
<keyword id="KW-0479">Metal-binding</keyword>
<keyword id="KW-0862">Zinc</keyword>
<keyword id="KW-0863">Zinc-finger</keyword>
<accession>Q8PNG0</accession>
<feature type="chain" id="PRO_0000190427" description="Recombination protein RecR">
    <location>
        <begin position="1"/>
        <end position="197"/>
    </location>
</feature>
<feature type="domain" description="Toprim" evidence="1">
    <location>
        <begin position="78"/>
        <end position="173"/>
    </location>
</feature>
<feature type="zinc finger region" description="C4-type" evidence="1">
    <location>
        <begin position="55"/>
        <end position="70"/>
    </location>
</feature>
<comment type="function">
    <text evidence="1">May play a role in DNA repair. It seems to be involved in an RecBC-independent recombinational process of DNA repair. It may act with RecF and RecO.</text>
</comment>
<comment type="similarity">
    <text evidence="1">Belongs to the RecR family.</text>
</comment>
<gene>
    <name evidence="1" type="primary">recR</name>
    <name type="ordered locus">XAC1111</name>
</gene>
<dbReference type="EMBL" id="AE008923">
    <property type="protein sequence ID" value="AAM35984.1"/>
    <property type="molecule type" value="Genomic_DNA"/>
</dbReference>
<dbReference type="RefSeq" id="WP_003483843.1">
    <property type="nucleotide sequence ID" value="NC_003919.1"/>
</dbReference>
<dbReference type="SMR" id="Q8PNG0"/>
<dbReference type="GeneID" id="66910286"/>
<dbReference type="KEGG" id="xac:XAC1111"/>
<dbReference type="eggNOG" id="COG0353">
    <property type="taxonomic scope" value="Bacteria"/>
</dbReference>
<dbReference type="HOGENOM" id="CLU_060739_1_2_6"/>
<dbReference type="Proteomes" id="UP000000576">
    <property type="component" value="Chromosome"/>
</dbReference>
<dbReference type="GO" id="GO:0003677">
    <property type="term" value="F:DNA binding"/>
    <property type="evidence" value="ECO:0007669"/>
    <property type="project" value="UniProtKB-UniRule"/>
</dbReference>
<dbReference type="GO" id="GO:0008270">
    <property type="term" value="F:zinc ion binding"/>
    <property type="evidence" value="ECO:0007669"/>
    <property type="project" value="UniProtKB-KW"/>
</dbReference>
<dbReference type="GO" id="GO:0006310">
    <property type="term" value="P:DNA recombination"/>
    <property type="evidence" value="ECO:0007669"/>
    <property type="project" value="UniProtKB-UniRule"/>
</dbReference>
<dbReference type="GO" id="GO:0006281">
    <property type="term" value="P:DNA repair"/>
    <property type="evidence" value="ECO:0007669"/>
    <property type="project" value="UniProtKB-UniRule"/>
</dbReference>
<dbReference type="CDD" id="cd01025">
    <property type="entry name" value="TOPRIM_recR"/>
    <property type="match status" value="1"/>
</dbReference>
<dbReference type="Gene3D" id="3.40.1360.10">
    <property type="match status" value="1"/>
</dbReference>
<dbReference type="Gene3D" id="6.10.250.240">
    <property type="match status" value="1"/>
</dbReference>
<dbReference type="Gene3D" id="1.10.8.420">
    <property type="entry name" value="RecR Domain 1"/>
    <property type="match status" value="1"/>
</dbReference>
<dbReference type="HAMAP" id="MF_00017">
    <property type="entry name" value="RecR"/>
    <property type="match status" value="1"/>
</dbReference>
<dbReference type="InterPro" id="IPR000093">
    <property type="entry name" value="DNA_Rcmb_RecR"/>
</dbReference>
<dbReference type="InterPro" id="IPR023627">
    <property type="entry name" value="Rcmb_RecR"/>
</dbReference>
<dbReference type="InterPro" id="IPR015967">
    <property type="entry name" value="Rcmb_RecR_Znf"/>
</dbReference>
<dbReference type="InterPro" id="IPR006171">
    <property type="entry name" value="TOPRIM_dom"/>
</dbReference>
<dbReference type="InterPro" id="IPR034137">
    <property type="entry name" value="TOPRIM_RecR"/>
</dbReference>
<dbReference type="NCBIfam" id="TIGR00615">
    <property type="entry name" value="recR"/>
    <property type="match status" value="1"/>
</dbReference>
<dbReference type="PANTHER" id="PTHR30446">
    <property type="entry name" value="RECOMBINATION PROTEIN RECR"/>
    <property type="match status" value="1"/>
</dbReference>
<dbReference type="PANTHER" id="PTHR30446:SF0">
    <property type="entry name" value="RECOMBINATION PROTEIN RECR"/>
    <property type="match status" value="1"/>
</dbReference>
<dbReference type="Pfam" id="PF21175">
    <property type="entry name" value="RecR_C"/>
    <property type="match status" value="1"/>
</dbReference>
<dbReference type="Pfam" id="PF21176">
    <property type="entry name" value="RecR_HhH"/>
    <property type="match status" value="1"/>
</dbReference>
<dbReference type="Pfam" id="PF02132">
    <property type="entry name" value="RecR_ZnF"/>
    <property type="match status" value="1"/>
</dbReference>
<dbReference type="Pfam" id="PF13662">
    <property type="entry name" value="Toprim_4"/>
    <property type="match status" value="1"/>
</dbReference>
<dbReference type="SMART" id="SM00493">
    <property type="entry name" value="TOPRIM"/>
    <property type="match status" value="1"/>
</dbReference>
<dbReference type="SUPFAM" id="SSF111304">
    <property type="entry name" value="Recombination protein RecR"/>
    <property type="match status" value="1"/>
</dbReference>
<dbReference type="PROSITE" id="PS01300">
    <property type="entry name" value="RECR"/>
    <property type="match status" value="1"/>
</dbReference>
<dbReference type="PROSITE" id="PS50880">
    <property type="entry name" value="TOPRIM"/>
    <property type="match status" value="1"/>
</dbReference>
<evidence type="ECO:0000255" key="1">
    <source>
        <dbReference type="HAMAP-Rule" id="MF_00017"/>
    </source>
</evidence>
<sequence length="197" mass="21488">MSTLLEQLIEAFRVLPGVGQKSAQRMAYHVLEREREGGRRLAAALGSAVEKVGHCVQCRDFTESEICTICASSSRDRQQLCVVESPADRLAIEHATGYRGLYFILQGRLSPLDGIGPRELGLDRLSERLAAGEVTEMIIATNATVEGEATAHYLAQLARQHAVRPSRLAQGMPLGGELEYVDRGTLSHAFGTRSEVL</sequence>
<organism>
    <name type="scientific">Xanthomonas axonopodis pv. citri (strain 306)</name>
    <dbReference type="NCBI Taxonomy" id="190486"/>
    <lineage>
        <taxon>Bacteria</taxon>
        <taxon>Pseudomonadati</taxon>
        <taxon>Pseudomonadota</taxon>
        <taxon>Gammaproteobacteria</taxon>
        <taxon>Lysobacterales</taxon>
        <taxon>Lysobacteraceae</taxon>
        <taxon>Xanthomonas</taxon>
    </lineage>
</organism>
<name>RECR_XANAC</name>
<reference key="1">
    <citation type="journal article" date="2002" name="Nature">
        <title>Comparison of the genomes of two Xanthomonas pathogens with differing host specificities.</title>
        <authorList>
            <person name="da Silva A.C.R."/>
            <person name="Ferro J.A."/>
            <person name="Reinach F.C."/>
            <person name="Farah C.S."/>
            <person name="Furlan L.R."/>
            <person name="Quaggio R.B."/>
            <person name="Monteiro-Vitorello C.B."/>
            <person name="Van Sluys M.A."/>
            <person name="Almeida N.F. Jr."/>
            <person name="Alves L.M.C."/>
            <person name="do Amaral A.M."/>
            <person name="Bertolini M.C."/>
            <person name="Camargo L.E.A."/>
            <person name="Camarotte G."/>
            <person name="Cannavan F."/>
            <person name="Cardozo J."/>
            <person name="Chambergo F."/>
            <person name="Ciapina L.P."/>
            <person name="Cicarelli R.M.B."/>
            <person name="Coutinho L.L."/>
            <person name="Cursino-Santos J.R."/>
            <person name="El-Dorry H."/>
            <person name="Faria J.B."/>
            <person name="Ferreira A.J.S."/>
            <person name="Ferreira R.C.C."/>
            <person name="Ferro M.I.T."/>
            <person name="Formighieri E.F."/>
            <person name="Franco M.C."/>
            <person name="Greggio C.C."/>
            <person name="Gruber A."/>
            <person name="Katsuyama A.M."/>
            <person name="Kishi L.T."/>
            <person name="Leite R.P."/>
            <person name="Lemos E.G.M."/>
            <person name="Lemos M.V.F."/>
            <person name="Locali E.C."/>
            <person name="Machado M.A."/>
            <person name="Madeira A.M.B.N."/>
            <person name="Martinez-Rossi N.M."/>
            <person name="Martins E.C."/>
            <person name="Meidanis J."/>
            <person name="Menck C.F.M."/>
            <person name="Miyaki C.Y."/>
            <person name="Moon D.H."/>
            <person name="Moreira L.M."/>
            <person name="Novo M.T.M."/>
            <person name="Okura V.K."/>
            <person name="Oliveira M.C."/>
            <person name="Oliveira V.R."/>
            <person name="Pereira H.A."/>
            <person name="Rossi A."/>
            <person name="Sena J.A.D."/>
            <person name="Silva C."/>
            <person name="de Souza R.F."/>
            <person name="Spinola L.A.F."/>
            <person name="Takita M.A."/>
            <person name="Tamura R.E."/>
            <person name="Teixeira E.C."/>
            <person name="Tezza R.I.D."/>
            <person name="Trindade dos Santos M."/>
            <person name="Truffi D."/>
            <person name="Tsai S.M."/>
            <person name="White F.F."/>
            <person name="Setubal J.C."/>
            <person name="Kitajima J.P."/>
        </authorList>
    </citation>
    <scope>NUCLEOTIDE SEQUENCE [LARGE SCALE GENOMIC DNA]</scope>
    <source>
        <strain>306</strain>
    </source>
</reference>